<accession>B2RZQ6</accession>
<reference key="1">
    <citation type="submission" date="2004-12" db="EMBL/GenBank/DDBJ databases">
        <title>The genome sequence of Borrelia hermsii and Borrelia turicatae: comparative analysis of two agents of endemic N. America relapsing fever.</title>
        <authorList>
            <person name="Porcella S.F."/>
            <person name="Raffel S.J."/>
            <person name="Schrumpf M.E."/>
            <person name="Montgomery B."/>
            <person name="Smith T."/>
            <person name="Schwan T.G."/>
        </authorList>
    </citation>
    <scope>NUCLEOTIDE SEQUENCE [LARGE SCALE GENOMIC DNA]</scope>
    <source>
        <strain>HS1 / DAH</strain>
    </source>
</reference>
<gene>
    <name evidence="1" type="primary">prfA</name>
    <name type="ordered locus">BH0196</name>
</gene>
<evidence type="ECO:0000255" key="1">
    <source>
        <dbReference type="HAMAP-Rule" id="MF_00093"/>
    </source>
</evidence>
<evidence type="ECO:0000256" key="2">
    <source>
        <dbReference type="SAM" id="MobiDB-lite"/>
    </source>
</evidence>
<organism>
    <name type="scientific">Borrelia hermsii (strain HS1 / DAH)</name>
    <dbReference type="NCBI Taxonomy" id="314723"/>
    <lineage>
        <taxon>Bacteria</taxon>
        <taxon>Pseudomonadati</taxon>
        <taxon>Spirochaetota</taxon>
        <taxon>Spirochaetia</taxon>
        <taxon>Spirochaetales</taxon>
        <taxon>Borreliaceae</taxon>
        <taxon>Borrelia</taxon>
    </lineage>
</organism>
<comment type="function">
    <text evidence="1">Peptide chain release factor 1 directs the termination of translation in response to the peptide chain termination codons UAG and UAA.</text>
</comment>
<comment type="subcellular location">
    <subcellularLocation>
        <location evidence="1">Cytoplasm</location>
    </subcellularLocation>
</comment>
<comment type="PTM">
    <text evidence="1">Methylated by PrmC. Methylation increases the termination efficiency of RF1.</text>
</comment>
<comment type="similarity">
    <text evidence="1">Belongs to the prokaryotic/mitochondrial release factor family.</text>
</comment>
<feature type="chain" id="PRO_1000093426" description="Peptide chain release factor 1">
    <location>
        <begin position="1"/>
        <end position="357"/>
    </location>
</feature>
<feature type="region of interest" description="Disordered" evidence="2">
    <location>
        <begin position="284"/>
        <end position="313"/>
    </location>
</feature>
<feature type="compositionally biased region" description="Basic and acidic residues" evidence="2">
    <location>
        <begin position="284"/>
        <end position="307"/>
    </location>
</feature>
<feature type="modified residue" description="N5-methylglutamine" evidence="1">
    <location>
        <position position="234"/>
    </location>
</feature>
<protein>
    <recommendedName>
        <fullName evidence="1">Peptide chain release factor 1</fullName>
        <shortName evidence="1">RF-1</shortName>
    </recommendedName>
</protein>
<keyword id="KW-0963">Cytoplasm</keyword>
<keyword id="KW-0488">Methylation</keyword>
<keyword id="KW-0648">Protein biosynthesis</keyword>
<dbReference type="EMBL" id="CP000048">
    <property type="protein sequence ID" value="AAX16712.1"/>
    <property type="molecule type" value="Genomic_DNA"/>
</dbReference>
<dbReference type="RefSeq" id="WP_012421969.1">
    <property type="nucleotide sequence ID" value="NZ_CP073136.1"/>
</dbReference>
<dbReference type="SMR" id="B2RZQ6"/>
<dbReference type="GeneID" id="71843002"/>
<dbReference type="KEGG" id="bhr:BH0196"/>
<dbReference type="HOGENOM" id="CLU_036856_0_1_12"/>
<dbReference type="Proteomes" id="UP000008834">
    <property type="component" value="Chromosome"/>
</dbReference>
<dbReference type="GO" id="GO:0005737">
    <property type="term" value="C:cytoplasm"/>
    <property type="evidence" value="ECO:0007669"/>
    <property type="project" value="UniProtKB-SubCell"/>
</dbReference>
<dbReference type="GO" id="GO:0016149">
    <property type="term" value="F:translation release factor activity, codon specific"/>
    <property type="evidence" value="ECO:0007669"/>
    <property type="project" value="UniProtKB-UniRule"/>
</dbReference>
<dbReference type="FunFam" id="3.30.160.20:FF:000004">
    <property type="entry name" value="Peptide chain release factor 1"/>
    <property type="match status" value="1"/>
</dbReference>
<dbReference type="FunFam" id="3.30.70.1660:FF:000002">
    <property type="entry name" value="Peptide chain release factor 1"/>
    <property type="match status" value="1"/>
</dbReference>
<dbReference type="FunFam" id="3.30.70.1660:FF:000004">
    <property type="entry name" value="Peptide chain release factor 1"/>
    <property type="match status" value="1"/>
</dbReference>
<dbReference type="Gene3D" id="3.30.160.20">
    <property type="match status" value="1"/>
</dbReference>
<dbReference type="Gene3D" id="3.30.70.1660">
    <property type="match status" value="1"/>
</dbReference>
<dbReference type="Gene3D" id="6.10.140.1950">
    <property type="match status" value="1"/>
</dbReference>
<dbReference type="HAMAP" id="MF_00093">
    <property type="entry name" value="Rel_fac_1"/>
    <property type="match status" value="1"/>
</dbReference>
<dbReference type="InterPro" id="IPR005139">
    <property type="entry name" value="PCRF"/>
</dbReference>
<dbReference type="InterPro" id="IPR000352">
    <property type="entry name" value="Pep_chain_release_fac_I"/>
</dbReference>
<dbReference type="InterPro" id="IPR045853">
    <property type="entry name" value="Pep_chain_release_fac_I_sf"/>
</dbReference>
<dbReference type="InterPro" id="IPR050057">
    <property type="entry name" value="Prokaryotic/Mito_RF"/>
</dbReference>
<dbReference type="InterPro" id="IPR004373">
    <property type="entry name" value="RF-1"/>
</dbReference>
<dbReference type="NCBIfam" id="TIGR00019">
    <property type="entry name" value="prfA"/>
    <property type="match status" value="1"/>
</dbReference>
<dbReference type="NCBIfam" id="NF001859">
    <property type="entry name" value="PRK00591.1"/>
    <property type="match status" value="1"/>
</dbReference>
<dbReference type="PANTHER" id="PTHR43804">
    <property type="entry name" value="LD18447P"/>
    <property type="match status" value="1"/>
</dbReference>
<dbReference type="PANTHER" id="PTHR43804:SF7">
    <property type="entry name" value="LD18447P"/>
    <property type="match status" value="1"/>
</dbReference>
<dbReference type="Pfam" id="PF03462">
    <property type="entry name" value="PCRF"/>
    <property type="match status" value="1"/>
</dbReference>
<dbReference type="Pfam" id="PF00472">
    <property type="entry name" value="RF-1"/>
    <property type="match status" value="1"/>
</dbReference>
<dbReference type="SMART" id="SM00937">
    <property type="entry name" value="PCRF"/>
    <property type="match status" value="1"/>
</dbReference>
<dbReference type="SUPFAM" id="SSF75620">
    <property type="entry name" value="Release factor"/>
    <property type="match status" value="1"/>
</dbReference>
<dbReference type="PROSITE" id="PS00745">
    <property type="entry name" value="RF_PROK_I"/>
    <property type="match status" value="1"/>
</dbReference>
<name>RF1_BORHD</name>
<sequence>MFLEKLSPIESKIKILEEKLQDINLVKNQKEYAKTVKEYNYLEKIKAKKDEYENILSQINENQKILSEEENLEMKELVKQELAHLNLKKDEVEHMIKILLLHQDENDSKNIIIEIRAGTGGEEAALFAHNLYEMYTKYSEKKKWKTELINFNETELGGFKEVSFEIKGKDVFKKLKHESGVHRVQRVPITESNGRLQTSAATVAVLPEVEDTDIEINEKDLRIDVYRSSGAGGQHVNTTDSAVRITHLPTGIVVQCQNERSQHKNKDQAMKILRARLYEFENLKKQEQRSNDRKQQVGSGDRSERIRTYNFPQNRVTDHRANISLYKLEEIMQGELDFLLDTLALKFQEQSLKDNSI</sequence>
<proteinExistence type="inferred from homology"/>